<accession>Q87KJ1</accession>
<dbReference type="EMBL" id="BA000031">
    <property type="protein sequence ID" value="BAC61249.1"/>
    <property type="molecule type" value="Genomic_DNA"/>
</dbReference>
<dbReference type="RefSeq" id="NP_799365.1">
    <property type="nucleotide sequence ID" value="NC_004603.1"/>
</dbReference>
<dbReference type="RefSeq" id="WP_005459084.1">
    <property type="nucleotide sequence ID" value="NC_004603.1"/>
</dbReference>
<dbReference type="SMR" id="Q87KJ1"/>
<dbReference type="GeneID" id="1190572"/>
<dbReference type="KEGG" id="vpa:VP2986"/>
<dbReference type="PATRIC" id="fig|223926.6.peg.2874"/>
<dbReference type="eggNOG" id="COG1965">
    <property type="taxonomic scope" value="Bacteria"/>
</dbReference>
<dbReference type="HOGENOM" id="CLU_080880_3_0_6"/>
<dbReference type="Proteomes" id="UP000002493">
    <property type="component" value="Chromosome 1"/>
</dbReference>
<dbReference type="GO" id="GO:0005829">
    <property type="term" value="C:cytosol"/>
    <property type="evidence" value="ECO:0007669"/>
    <property type="project" value="TreeGrafter"/>
</dbReference>
<dbReference type="GO" id="GO:0008199">
    <property type="term" value="F:ferric iron binding"/>
    <property type="evidence" value="ECO:0007669"/>
    <property type="project" value="InterPro"/>
</dbReference>
<dbReference type="GO" id="GO:0008198">
    <property type="term" value="F:ferrous iron binding"/>
    <property type="evidence" value="ECO:0007669"/>
    <property type="project" value="TreeGrafter"/>
</dbReference>
<dbReference type="GO" id="GO:0016226">
    <property type="term" value="P:iron-sulfur cluster assembly"/>
    <property type="evidence" value="ECO:0007669"/>
    <property type="project" value="UniProtKB-UniRule"/>
</dbReference>
<dbReference type="CDD" id="cd00503">
    <property type="entry name" value="Frataxin"/>
    <property type="match status" value="1"/>
</dbReference>
<dbReference type="Gene3D" id="3.30.920.10">
    <property type="entry name" value="Frataxin/CyaY"/>
    <property type="match status" value="1"/>
</dbReference>
<dbReference type="HAMAP" id="MF_00142">
    <property type="entry name" value="CyaY"/>
    <property type="match status" value="1"/>
</dbReference>
<dbReference type="InterPro" id="IPR047584">
    <property type="entry name" value="CyaY"/>
</dbReference>
<dbReference type="InterPro" id="IPR002908">
    <property type="entry name" value="Frataxin/CyaY"/>
</dbReference>
<dbReference type="InterPro" id="IPR036524">
    <property type="entry name" value="Frataxin/CyaY_sf"/>
</dbReference>
<dbReference type="InterPro" id="IPR020895">
    <property type="entry name" value="Frataxin_CS"/>
</dbReference>
<dbReference type="NCBIfam" id="TIGR03421">
    <property type="entry name" value="FeS_CyaY"/>
    <property type="match status" value="1"/>
</dbReference>
<dbReference type="PANTHER" id="PTHR16821">
    <property type="entry name" value="FRATAXIN"/>
    <property type="match status" value="1"/>
</dbReference>
<dbReference type="PANTHER" id="PTHR16821:SF2">
    <property type="entry name" value="FRATAXIN, MITOCHONDRIAL"/>
    <property type="match status" value="1"/>
</dbReference>
<dbReference type="Pfam" id="PF01491">
    <property type="entry name" value="Frataxin_Cyay"/>
    <property type="match status" value="1"/>
</dbReference>
<dbReference type="SMART" id="SM01219">
    <property type="entry name" value="Frataxin_Cyay"/>
    <property type="match status" value="1"/>
</dbReference>
<dbReference type="SUPFAM" id="SSF55387">
    <property type="entry name" value="Frataxin/Nqo15-like"/>
    <property type="match status" value="1"/>
</dbReference>
<dbReference type="PROSITE" id="PS01344">
    <property type="entry name" value="FRATAXIN_1"/>
    <property type="match status" value="1"/>
</dbReference>
<dbReference type="PROSITE" id="PS50810">
    <property type="entry name" value="FRATAXIN_2"/>
    <property type="match status" value="1"/>
</dbReference>
<keyword id="KW-0408">Iron</keyword>
<keyword id="KW-0479">Metal-binding</keyword>
<proteinExistence type="inferred from homology"/>
<reference key="1">
    <citation type="journal article" date="2003" name="Lancet">
        <title>Genome sequence of Vibrio parahaemolyticus: a pathogenic mechanism distinct from that of V. cholerae.</title>
        <authorList>
            <person name="Makino K."/>
            <person name="Oshima K."/>
            <person name="Kurokawa K."/>
            <person name="Yokoyama K."/>
            <person name="Uda T."/>
            <person name="Tagomori K."/>
            <person name="Iijima Y."/>
            <person name="Najima M."/>
            <person name="Nakano M."/>
            <person name="Yamashita A."/>
            <person name="Kubota Y."/>
            <person name="Kimura S."/>
            <person name="Yasunaga T."/>
            <person name="Honda T."/>
            <person name="Shinagawa H."/>
            <person name="Hattori M."/>
            <person name="Iida T."/>
        </authorList>
    </citation>
    <scope>NUCLEOTIDE SEQUENCE [LARGE SCALE GENOMIC DNA]</scope>
    <source>
        <strain>RIMD 2210633</strain>
    </source>
</reference>
<evidence type="ECO:0000255" key="1">
    <source>
        <dbReference type="HAMAP-Rule" id="MF_00142"/>
    </source>
</evidence>
<sequence>MNDTEFHQLVDAQMQIIEESIDDSGADIDYEVSGNVMTLEFEDRSQIIINRQEPMHEIWLASKSGGFHFKLVEDKWTCSKTGMELFEMVKQECEKHAGEEIDWA</sequence>
<name>CYAY_VIBPA</name>
<comment type="function">
    <text evidence="1">Involved in iron-sulfur (Fe-S) cluster assembly. May act as a regulator of Fe-S biogenesis.</text>
</comment>
<comment type="similarity">
    <text evidence="1">Belongs to the frataxin family.</text>
</comment>
<feature type="chain" id="PRO_0000193966" description="Iron-sulfur cluster assembly protein CyaY">
    <location>
        <begin position="1"/>
        <end position="104"/>
    </location>
</feature>
<organism>
    <name type="scientific">Vibrio parahaemolyticus serotype O3:K6 (strain RIMD 2210633)</name>
    <dbReference type="NCBI Taxonomy" id="223926"/>
    <lineage>
        <taxon>Bacteria</taxon>
        <taxon>Pseudomonadati</taxon>
        <taxon>Pseudomonadota</taxon>
        <taxon>Gammaproteobacteria</taxon>
        <taxon>Vibrionales</taxon>
        <taxon>Vibrionaceae</taxon>
        <taxon>Vibrio</taxon>
    </lineage>
</organism>
<protein>
    <recommendedName>
        <fullName evidence="1">Iron-sulfur cluster assembly protein CyaY</fullName>
    </recommendedName>
</protein>
<gene>
    <name evidence="1" type="primary">cyaY</name>
    <name type="ordered locus">VP2986</name>
</gene>